<proteinExistence type="inferred from homology"/>
<keyword id="KW-0067">ATP-binding</keyword>
<keyword id="KW-0963">Cytoplasm</keyword>
<keyword id="KW-0436">Ligase</keyword>
<keyword id="KW-0460">Magnesium</keyword>
<keyword id="KW-0479">Metal-binding</keyword>
<keyword id="KW-0547">Nucleotide-binding</keyword>
<keyword id="KW-0658">Purine biosynthesis</keyword>
<keyword id="KW-1185">Reference proteome</keyword>
<protein>
    <recommendedName>
        <fullName evidence="1">Phosphoribosylformylglycinamidine synthase subunit PurL</fullName>
        <shortName evidence="1">FGAM synthase</shortName>
        <ecNumber evidence="1">6.3.5.3</ecNumber>
    </recommendedName>
    <alternativeName>
        <fullName evidence="1">Formylglycinamide ribonucleotide amidotransferase subunit II</fullName>
        <shortName evidence="1">FGAR amidotransferase II</shortName>
        <shortName evidence="1">FGAR-AT II</shortName>
    </alternativeName>
    <alternativeName>
        <fullName evidence="1">Glutamine amidotransferase PurL</fullName>
    </alternativeName>
    <alternativeName>
        <fullName evidence="1">Phosphoribosylformylglycinamidine synthase subunit II</fullName>
    </alternativeName>
</protein>
<name>PURL_LACDA</name>
<comment type="function">
    <text evidence="1">Part of the phosphoribosylformylglycinamidine synthase complex involved in the purines biosynthetic pathway. Catalyzes the ATP-dependent conversion of formylglycinamide ribonucleotide (FGAR) and glutamine to yield formylglycinamidine ribonucleotide (FGAM) and glutamate. The FGAM synthase complex is composed of three subunits. PurQ produces an ammonia molecule by converting glutamine to glutamate. PurL transfers the ammonia molecule to FGAR to form FGAM in an ATP-dependent manner. PurS interacts with PurQ and PurL and is thought to assist in the transfer of the ammonia molecule from PurQ to PurL.</text>
</comment>
<comment type="catalytic activity">
    <reaction evidence="1">
        <text>N(2)-formyl-N(1)-(5-phospho-beta-D-ribosyl)glycinamide + L-glutamine + ATP + H2O = 2-formamido-N(1)-(5-O-phospho-beta-D-ribosyl)acetamidine + L-glutamate + ADP + phosphate + H(+)</text>
        <dbReference type="Rhea" id="RHEA:17129"/>
        <dbReference type="ChEBI" id="CHEBI:15377"/>
        <dbReference type="ChEBI" id="CHEBI:15378"/>
        <dbReference type="ChEBI" id="CHEBI:29985"/>
        <dbReference type="ChEBI" id="CHEBI:30616"/>
        <dbReference type="ChEBI" id="CHEBI:43474"/>
        <dbReference type="ChEBI" id="CHEBI:58359"/>
        <dbReference type="ChEBI" id="CHEBI:147286"/>
        <dbReference type="ChEBI" id="CHEBI:147287"/>
        <dbReference type="ChEBI" id="CHEBI:456216"/>
        <dbReference type="EC" id="6.3.5.3"/>
    </reaction>
</comment>
<comment type="pathway">
    <text evidence="1">Purine metabolism; IMP biosynthesis via de novo pathway; 5-amino-1-(5-phospho-D-ribosyl)imidazole from N(2)-formyl-N(1)-(5-phospho-D-ribosyl)glycinamide: step 1/2.</text>
</comment>
<comment type="subunit">
    <text evidence="1">Monomer. Part of the FGAM synthase complex composed of 1 PurL, 1 PurQ and 2 PurS subunits.</text>
</comment>
<comment type="subcellular location">
    <subcellularLocation>
        <location evidence="1">Cytoplasm</location>
    </subcellularLocation>
</comment>
<comment type="similarity">
    <text evidence="1">Belongs to the FGAMS family.</text>
</comment>
<evidence type="ECO:0000255" key="1">
    <source>
        <dbReference type="HAMAP-Rule" id="MF_00420"/>
    </source>
</evidence>
<feature type="chain" id="PRO_1000050313" description="Phosphoribosylformylglycinamidine synthase subunit PurL">
    <location>
        <begin position="1"/>
        <end position="740"/>
    </location>
</feature>
<feature type="active site" evidence="1">
    <location>
        <position position="53"/>
    </location>
</feature>
<feature type="active site" description="Proton acceptor" evidence="1">
    <location>
        <position position="99"/>
    </location>
</feature>
<feature type="binding site" evidence="1">
    <location>
        <position position="56"/>
    </location>
    <ligand>
        <name>ATP</name>
        <dbReference type="ChEBI" id="CHEBI:30616"/>
    </ligand>
</feature>
<feature type="binding site" evidence="1">
    <location>
        <position position="95"/>
    </location>
    <ligand>
        <name>ATP</name>
        <dbReference type="ChEBI" id="CHEBI:30616"/>
    </ligand>
</feature>
<feature type="binding site" evidence="1">
    <location>
        <position position="97"/>
    </location>
    <ligand>
        <name>Mg(2+)</name>
        <dbReference type="ChEBI" id="CHEBI:18420"/>
        <label>1</label>
    </ligand>
</feature>
<feature type="binding site" evidence="1">
    <location>
        <begin position="98"/>
        <end position="101"/>
    </location>
    <ligand>
        <name>substrate</name>
    </ligand>
</feature>
<feature type="binding site" evidence="1">
    <location>
        <position position="120"/>
    </location>
    <ligand>
        <name>substrate</name>
    </ligand>
</feature>
<feature type="binding site" evidence="1">
    <location>
        <position position="121"/>
    </location>
    <ligand>
        <name>Mg(2+)</name>
        <dbReference type="ChEBI" id="CHEBI:18420"/>
        <label>2</label>
    </ligand>
</feature>
<feature type="binding site" evidence="1">
    <location>
        <position position="244"/>
    </location>
    <ligand>
        <name>substrate</name>
    </ligand>
</feature>
<feature type="binding site" evidence="1">
    <location>
        <position position="274"/>
    </location>
    <ligand>
        <name>Mg(2+)</name>
        <dbReference type="ChEBI" id="CHEBI:18420"/>
        <label>2</label>
    </ligand>
</feature>
<feature type="binding site" evidence="1">
    <location>
        <begin position="318"/>
        <end position="320"/>
    </location>
    <ligand>
        <name>substrate</name>
    </ligand>
</feature>
<feature type="binding site" evidence="1">
    <location>
        <position position="501"/>
    </location>
    <ligand>
        <name>ATP</name>
        <dbReference type="ChEBI" id="CHEBI:30616"/>
    </ligand>
</feature>
<feature type="binding site" evidence="1">
    <location>
        <position position="538"/>
    </location>
    <ligand>
        <name>ATP</name>
        <dbReference type="ChEBI" id="CHEBI:30616"/>
    </ligand>
</feature>
<feature type="binding site" evidence="1">
    <location>
        <position position="539"/>
    </location>
    <ligand>
        <name>Mg(2+)</name>
        <dbReference type="ChEBI" id="CHEBI:18420"/>
        <label>1</label>
    </ligand>
</feature>
<feature type="binding site" evidence="1">
    <location>
        <position position="541"/>
    </location>
    <ligand>
        <name>substrate</name>
    </ligand>
</feature>
<sequence length="740" mass="80011">MMQEMTPEEIKEKKPYLDWSLSEEEYDYICDKLLHRLPNYTETGLFAAMWSEHCSYKKSKSVLRLFPTKGPRILQGPGEGAGVVDIGDGQAVVFKAESHNHPTAVEPYQGAATGVGGILRDVFSMGARPVATLDSLHFGELDDAHTRWLLNETVAGIGGYGNCMGIPTVGGELTFDDIYKGNPVMNAMSVGLLDVKDMQKGLAQGEGNAVMYVGAKTGRDGIHGATFASHSFDSEHESQRSAVQVGDPFMEKLLLEACLELTQKHADWLVGIQDMGAAGIVSSSSEMASEGKSGMELNLDLVPQRESGMSAYEIMLSESQERMLLCVKKGHEEDVKKIFDFYDLDAVVIGRITSGHNYVLRHHGEVVCDIPVTSLTEDVLEEPSEEKQPQHMIDDAAKPAWEPEITDLAKTYKQMLAQPTIASKGMFTQTYDSMVRTSTVVGPGEDSGVLRVRGTHKGIAMTTDGNGRFIYLDPEIGGKRAVVEAAGNIIASGAEPLAITDCLNFGNPNEPEVFWELHHSVMGIAKACEVLETPVVSGNVSLYNETDGKSIYPTPMVGMVGLVKNLDHLVRDSFQEEGDDLYLVGQTGADYAGSELQKMLTGEIFGSLNDLDLDHIKDYQKRLLAQMEAGHVASAHDLSEGGLAVSLAESSFGHGIGAEVACDLTSAELFSETPGRFLVSVPSEYSAEFAAALAADAVKIGQTAGDSLKLTLKDQAADLPVAELKQIWEEALPCLMKSKD</sequence>
<accession>Q1G9F8</accession>
<dbReference type="EC" id="6.3.5.3" evidence="1"/>
<dbReference type="EMBL" id="CR954253">
    <property type="protein sequence ID" value="CAI98241.1"/>
    <property type="molecule type" value="Genomic_DNA"/>
</dbReference>
<dbReference type="RefSeq" id="WP_004560840.1">
    <property type="nucleotide sequence ID" value="NZ_JQAV01000009.1"/>
</dbReference>
<dbReference type="SMR" id="Q1G9F8"/>
<dbReference type="STRING" id="390333.Ldb1440"/>
<dbReference type="KEGG" id="ldb:Ldb1440"/>
<dbReference type="PATRIC" id="fig|390333.13.peg.1928"/>
<dbReference type="eggNOG" id="COG0046">
    <property type="taxonomic scope" value="Bacteria"/>
</dbReference>
<dbReference type="HOGENOM" id="CLU_003100_0_1_9"/>
<dbReference type="BioCyc" id="LDEL390333:LDB_RS06200-MONOMER"/>
<dbReference type="UniPathway" id="UPA00074">
    <property type="reaction ID" value="UER00128"/>
</dbReference>
<dbReference type="Proteomes" id="UP000001259">
    <property type="component" value="Chromosome"/>
</dbReference>
<dbReference type="GO" id="GO:0005737">
    <property type="term" value="C:cytoplasm"/>
    <property type="evidence" value="ECO:0007669"/>
    <property type="project" value="UniProtKB-SubCell"/>
</dbReference>
<dbReference type="GO" id="GO:0005524">
    <property type="term" value="F:ATP binding"/>
    <property type="evidence" value="ECO:0007669"/>
    <property type="project" value="UniProtKB-UniRule"/>
</dbReference>
<dbReference type="GO" id="GO:0000287">
    <property type="term" value="F:magnesium ion binding"/>
    <property type="evidence" value="ECO:0007669"/>
    <property type="project" value="UniProtKB-UniRule"/>
</dbReference>
<dbReference type="GO" id="GO:0004642">
    <property type="term" value="F:phosphoribosylformylglycinamidine synthase activity"/>
    <property type="evidence" value="ECO:0007669"/>
    <property type="project" value="UniProtKB-UniRule"/>
</dbReference>
<dbReference type="GO" id="GO:0006189">
    <property type="term" value="P:'de novo' IMP biosynthetic process"/>
    <property type="evidence" value="ECO:0007669"/>
    <property type="project" value="UniProtKB-UniRule"/>
</dbReference>
<dbReference type="CDD" id="cd02203">
    <property type="entry name" value="PurL_repeat1"/>
    <property type="match status" value="1"/>
</dbReference>
<dbReference type="CDD" id="cd02204">
    <property type="entry name" value="PurL_repeat2"/>
    <property type="match status" value="1"/>
</dbReference>
<dbReference type="FunFam" id="3.30.1330.10:FF:000004">
    <property type="entry name" value="Phosphoribosylformylglycinamidine synthase subunit PurL"/>
    <property type="match status" value="1"/>
</dbReference>
<dbReference type="Gene3D" id="3.90.650.10">
    <property type="entry name" value="PurM-like C-terminal domain"/>
    <property type="match status" value="2"/>
</dbReference>
<dbReference type="Gene3D" id="3.30.1330.10">
    <property type="entry name" value="PurM-like, N-terminal domain"/>
    <property type="match status" value="2"/>
</dbReference>
<dbReference type="HAMAP" id="MF_00420">
    <property type="entry name" value="PurL_2"/>
    <property type="match status" value="1"/>
</dbReference>
<dbReference type="InterPro" id="IPR010074">
    <property type="entry name" value="PRibForGlyAmidine_synth_PurL"/>
</dbReference>
<dbReference type="InterPro" id="IPR041609">
    <property type="entry name" value="PurL_linker"/>
</dbReference>
<dbReference type="InterPro" id="IPR010918">
    <property type="entry name" value="PurM-like_C_dom"/>
</dbReference>
<dbReference type="InterPro" id="IPR036676">
    <property type="entry name" value="PurM-like_C_sf"/>
</dbReference>
<dbReference type="InterPro" id="IPR016188">
    <property type="entry name" value="PurM-like_N"/>
</dbReference>
<dbReference type="InterPro" id="IPR036921">
    <property type="entry name" value="PurM-like_N_sf"/>
</dbReference>
<dbReference type="NCBIfam" id="TIGR01736">
    <property type="entry name" value="FGAM_synth_II"/>
    <property type="match status" value="1"/>
</dbReference>
<dbReference type="NCBIfam" id="NF002290">
    <property type="entry name" value="PRK01213.1"/>
    <property type="match status" value="1"/>
</dbReference>
<dbReference type="PANTHER" id="PTHR43555">
    <property type="entry name" value="PHOSPHORIBOSYLFORMYLGLYCINAMIDINE SYNTHASE SUBUNIT PURL"/>
    <property type="match status" value="1"/>
</dbReference>
<dbReference type="PANTHER" id="PTHR43555:SF1">
    <property type="entry name" value="PHOSPHORIBOSYLFORMYLGLYCINAMIDINE SYNTHASE SUBUNIT PURL"/>
    <property type="match status" value="1"/>
</dbReference>
<dbReference type="Pfam" id="PF00586">
    <property type="entry name" value="AIRS"/>
    <property type="match status" value="2"/>
</dbReference>
<dbReference type="Pfam" id="PF02769">
    <property type="entry name" value="AIRS_C"/>
    <property type="match status" value="2"/>
</dbReference>
<dbReference type="Pfam" id="PF18072">
    <property type="entry name" value="FGAR-AT_linker"/>
    <property type="match status" value="1"/>
</dbReference>
<dbReference type="PIRSF" id="PIRSF001587">
    <property type="entry name" value="FGAM_synthase_II"/>
    <property type="match status" value="1"/>
</dbReference>
<dbReference type="SUPFAM" id="SSF56042">
    <property type="entry name" value="PurM C-terminal domain-like"/>
    <property type="match status" value="2"/>
</dbReference>
<dbReference type="SUPFAM" id="SSF55326">
    <property type="entry name" value="PurM N-terminal domain-like"/>
    <property type="match status" value="2"/>
</dbReference>
<reference key="1">
    <citation type="journal article" date="2006" name="Proc. Natl. Acad. Sci. U.S.A.">
        <title>The complete genome sequence of Lactobacillus bulgaricus reveals extensive and ongoing reductive evolution.</title>
        <authorList>
            <person name="van de Guchte M."/>
            <person name="Penaud S."/>
            <person name="Grimaldi C."/>
            <person name="Barbe V."/>
            <person name="Bryson K."/>
            <person name="Nicolas P."/>
            <person name="Robert C."/>
            <person name="Oztas S."/>
            <person name="Mangenot S."/>
            <person name="Couloux A."/>
            <person name="Loux V."/>
            <person name="Dervyn R."/>
            <person name="Bossy R."/>
            <person name="Bolotin A."/>
            <person name="Batto J.-M."/>
            <person name="Walunas T."/>
            <person name="Gibrat J.-F."/>
            <person name="Bessieres P."/>
            <person name="Weissenbach J."/>
            <person name="Ehrlich S.D."/>
            <person name="Maguin E."/>
        </authorList>
    </citation>
    <scope>NUCLEOTIDE SEQUENCE [LARGE SCALE GENOMIC DNA]</scope>
    <source>
        <strain>ATCC 11842 / DSM 20081 / BCRC 10696 / JCM 1002 / NBRC 13953 / NCIMB 11778 / NCTC 12712 / WDCM 00102 / Lb 14</strain>
    </source>
</reference>
<organism>
    <name type="scientific">Lactobacillus delbrueckii subsp. bulgaricus (strain ATCC 11842 / DSM 20081 / BCRC 10696 / JCM 1002 / NBRC 13953 / NCIMB 11778 / NCTC 12712 / WDCM 00102 / Lb 14)</name>
    <dbReference type="NCBI Taxonomy" id="390333"/>
    <lineage>
        <taxon>Bacteria</taxon>
        <taxon>Bacillati</taxon>
        <taxon>Bacillota</taxon>
        <taxon>Bacilli</taxon>
        <taxon>Lactobacillales</taxon>
        <taxon>Lactobacillaceae</taxon>
        <taxon>Lactobacillus</taxon>
    </lineage>
</organism>
<gene>
    <name evidence="1" type="primary">purL</name>
    <name type="ordered locus">Ldb1440</name>
</gene>